<feature type="chain" id="PRO_1000064513" description="Glucans biosynthesis protein C">
    <location>
        <begin position="1"/>
        <end position="385"/>
    </location>
</feature>
<feature type="transmembrane region" description="Helical" evidence="1">
    <location>
        <begin position="17"/>
        <end position="37"/>
    </location>
</feature>
<feature type="transmembrane region" description="Helical" evidence="1">
    <location>
        <begin position="60"/>
        <end position="80"/>
    </location>
</feature>
<feature type="transmembrane region" description="Helical" evidence="1">
    <location>
        <begin position="91"/>
        <end position="111"/>
    </location>
</feature>
<feature type="transmembrane region" description="Helical" evidence="1">
    <location>
        <begin position="137"/>
        <end position="157"/>
    </location>
</feature>
<feature type="transmembrane region" description="Helical" evidence="1">
    <location>
        <begin position="173"/>
        <end position="193"/>
    </location>
</feature>
<feature type="transmembrane region" description="Helical" evidence="1">
    <location>
        <begin position="212"/>
        <end position="232"/>
    </location>
</feature>
<feature type="transmembrane region" description="Helical" evidence="1">
    <location>
        <begin position="239"/>
        <end position="259"/>
    </location>
</feature>
<feature type="transmembrane region" description="Helical" evidence="1">
    <location>
        <begin position="274"/>
        <end position="294"/>
    </location>
</feature>
<feature type="transmembrane region" description="Helical" evidence="1">
    <location>
        <begin position="311"/>
        <end position="331"/>
    </location>
</feature>
<feature type="transmembrane region" description="Helical" evidence="1">
    <location>
        <begin position="338"/>
        <end position="358"/>
    </location>
</feature>
<gene>
    <name evidence="1" type="primary">mdoC</name>
    <name evidence="1" type="synonym">opgC</name>
    <name type="ordered locus">ECP_1040</name>
</gene>
<protein>
    <recommendedName>
        <fullName evidence="1">Glucans biosynthesis protein C</fullName>
        <ecNumber evidence="1">2.1.-.-</ecNumber>
    </recommendedName>
</protein>
<name>OPGC_ECOL5</name>
<reference key="1">
    <citation type="journal article" date="2006" name="Mol. Microbiol.">
        <title>Role of pathogenicity island-associated integrases in the genome plasticity of uropathogenic Escherichia coli strain 536.</title>
        <authorList>
            <person name="Hochhut B."/>
            <person name="Wilde C."/>
            <person name="Balling G."/>
            <person name="Middendorf B."/>
            <person name="Dobrindt U."/>
            <person name="Brzuszkiewicz E."/>
            <person name="Gottschalk G."/>
            <person name="Carniel E."/>
            <person name="Hacker J."/>
        </authorList>
    </citation>
    <scope>NUCLEOTIDE SEQUENCE [LARGE SCALE GENOMIC DNA]</scope>
    <source>
        <strain>536 / UPEC</strain>
    </source>
</reference>
<organism>
    <name type="scientific">Escherichia coli O6:K15:H31 (strain 536 / UPEC)</name>
    <dbReference type="NCBI Taxonomy" id="362663"/>
    <lineage>
        <taxon>Bacteria</taxon>
        <taxon>Pseudomonadati</taxon>
        <taxon>Pseudomonadota</taxon>
        <taxon>Gammaproteobacteria</taxon>
        <taxon>Enterobacterales</taxon>
        <taxon>Enterobacteriaceae</taxon>
        <taxon>Escherichia</taxon>
    </lineage>
</organism>
<proteinExistence type="inferred from homology"/>
<evidence type="ECO:0000255" key="1">
    <source>
        <dbReference type="HAMAP-Rule" id="MF_01066"/>
    </source>
</evidence>
<dbReference type="EC" id="2.1.-.-" evidence="1"/>
<dbReference type="EMBL" id="CP000247">
    <property type="protein sequence ID" value="ABG69053.1"/>
    <property type="molecule type" value="Genomic_DNA"/>
</dbReference>
<dbReference type="RefSeq" id="WP_001070362.1">
    <property type="nucleotide sequence ID" value="NC_008253.1"/>
</dbReference>
<dbReference type="KEGG" id="ecp:ECP_1040"/>
<dbReference type="HOGENOM" id="CLU_036182_2_0_6"/>
<dbReference type="UniPathway" id="UPA00637"/>
<dbReference type="Proteomes" id="UP000009182">
    <property type="component" value="Chromosome"/>
</dbReference>
<dbReference type="GO" id="GO:0005886">
    <property type="term" value="C:plasma membrane"/>
    <property type="evidence" value="ECO:0007669"/>
    <property type="project" value="UniProtKB-SubCell"/>
</dbReference>
<dbReference type="GO" id="GO:0016747">
    <property type="term" value="F:acyltransferase activity, transferring groups other than amino-acyl groups"/>
    <property type="evidence" value="ECO:0007669"/>
    <property type="project" value="InterPro"/>
</dbReference>
<dbReference type="GO" id="GO:0016741">
    <property type="term" value="F:transferase activity, transferring one-carbon groups"/>
    <property type="evidence" value="ECO:0007669"/>
    <property type="project" value="UniProtKB-UniRule"/>
</dbReference>
<dbReference type="GO" id="GO:0009250">
    <property type="term" value="P:glucan biosynthetic process"/>
    <property type="evidence" value="ECO:0007669"/>
    <property type="project" value="UniProtKB-UniRule"/>
</dbReference>
<dbReference type="HAMAP" id="MF_01066">
    <property type="entry name" value="MdoC_OpgC"/>
    <property type="match status" value="1"/>
</dbReference>
<dbReference type="InterPro" id="IPR002656">
    <property type="entry name" value="Acyl_transf_3_dom"/>
</dbReference>
<dbReference type="InterPro" id="IPR050623">
    <property type="entry name" value="Glucan_succinyl_AcylTrfase"/>
</dbReference>
<dbReference type="InterPro" id="IPR023723">
    <property type="entry name" value="Glucans_biosynth_C"/>
</dbReference>
<dbReference type="NCBIfam" id="NF003014">
    <property type="entry name" value="PRK03854.1"/>
    <property type="match status" value="1"/>
</dbReference>
<dbReference type="PANTHER" id="PTHR36927">
    <property type="entry name" value="BLR4337 PROTEIN"/>
    <property type="match status" value="1"/>
</dbReference>
<dbReference type="PANTHER" id="PTHR36927:SF3">
    <property type="entry name" value="GLUCANS BIOSYNTHESIS PROTEIN C"/>
    <property type="match status" value="1"/>
</dbReference>
<dbReference type="Pfam" id="PF01757">
    <property type="entry name" value="Acyl_transf_3"/>
    <property type="match status" value="1"/>
</dbReference>
<comment type="function">
    <text evidence="1">Necessary for the succinyl substitution of periplasmic glucans. Could catalyze the transfer of succinyl residues from the cytoplasmic side of the membrane to the nascent glucan backbones on the periplasmic side of the membrane.</text>
</comment>
<comment type="pathway">
    <text evidence="1">Glycan metabolism; osmoregulated periplasmic glucan (OPG) biosynthesis.</text>
</comment>
<comment type="subcellular location">
    <subcellularLocation>
        <location evidence="1">Cell membrane</location>
        <topology evidence="1">Multi-pass membrane protein</topology>
    </subcellularLocation>
</comment>
<comment type="similarity">
    <text evidence="1">Belongs to the acyltransferase 3 family. OpgC subfamily.</text>
</comment>
<keyword id="KW-0012">Acyltransferase</keyword>
<keyword id="KW-1003">Cell membrane</keyword>
<keyword id="KW-0472">Membrane</keyword>
<keyword id="KW-0808">Transferase</keyword>
<keyword id="KW-0812">Transmembrane</keyword>
<keyword id="KW-1133">Transmembrane helix</keyword>
<accession>Q0TJ26</accession>
<sequence>MNPVPAQREYFLDSIRAWLMLLGIPFHISLIYSSHTWHVNSAEPSLWLTLFNDFIHSFRMQVFFVISGYFSYMLFLRYPLKKWWKVRVERVGIPMLTAIPLLTLPQFIMLQYVKGKAESWPRLSLYDKYNTLAWELISHLWFLLVLVVMTTLCVWIFKRIRNNLENSDKTNKKFSMVKLSVIFLCLGIGYAVIRRTIFIVYPPILSNGMFNFIVMQTLFYLPFFILGALAFIFPHLKALFTTPSRGCTLAAALAFVAYLLNQRYGSGDAWMYETESVITMVLGLWMVNVVFSFGHRLLNFQSARVTYFVNASLFIYLVHHPLTLFFGAYITPHITSNWLGFLCGLIFVVGIAIILYEIHLRIPLLKFLFSGKPVVKRENDKAPAR</sequence>